<dbReference type="EC" id="5.2.1.8" evidence="1"/>
<dbReference type="EMBL" id="CP000103">
    <property type="protein sequence ID" value="ABB73828.1"/>
    <property type="molecule type" value="Genomic_DNA"/>
</dbReference>
<dbReference type="RefSeq" id="WP_011379882.1">
    <property type="nucleotide sequence ID" value="NC_007614.1"/>
</dbReference>
<dbReference type="SMR" id="Q2YBP3"/>
<dbReference type="STRING" id="323848.Nmul_A0520"/>
<dbReference type="KEGG" id="nmu:Nmul_A0520"/>
<dbReference type="eggNOG" id="COG0760">
    <property type="taxonomic scope" value="Bacteria"/>
</dbReference>
<dbReference type="HOGENOM" id="CLU_034646_11_0_4"/>
<dbReference type="OrthoDB" id="14196at2"/>
<dbReference type="Proteomes" id="UP000002718">
    <property type="component" value="Chromosome"/>
</dbReference>
<dbReference type="GO" id="GO:0030288">
    <property type="term" value="C:outer membrane-bounded periplasmic space"/>
    <property type="evidence" value="ECO:0007669"/>
    <property type="project" value="InterPro"/>
</dbReference>
<dbReference type="GO" id="GO:0042277">
    <property type="term" value="F:peptide binding"/>
    <property type="evidence" value="ECO:0007669"/>
    <property type="project" value="InterPro"/>
</dbReference>
<dbReference type="GO" id="GO:0003755">
    <property type="term" value="F:peptidyl-prolyl cis-trans isomerase activity"/>
    <property type="evidence" value="ECO:0007669"/>
    <property type="project" value="UniProtKB-UniRule"/>
</dbReference>
<dbReference type="GO" id="GO:0051082">
    <property type="term" value="F:unfolded protein binding"/>
    <property type="evidence" value="ECO:0007669"/>
    <property type="project" value="UniProtKB-UniRule"/>
</dbReference>
<dbReference type="GO" id="GO:0043165">
    <property type="term" value="P:Gram-negative-bacterium-type cell outer membrane assembly"/>
    <property type="evidence" value="ECO:0007669"/>
    <property type="project" value="InterPro"/>
</dbReference>
<dbReference type="GO" id="GO:0006457">
    <property type="term" value="P:protein folding"/>
    <property type="evidence" value="ECO:0007669"/>
    <property type="project" value="UniProtKB-UniRule"/>
</dbReference>
<dbReference type="GO" id="GO:0050821">
    <property type="term" value="P:protein stabilization"/>
    <property type="evidence" value="ECO:0007669"/>
    <property type="project" value="InterPro"/>
</dbReference>
<dbReference type="Gene3D" id="3.10.50.40">
    <property type="match status" value="2"/>
</dbReference>
<dbReference type="Gene3D" id="1.10.4030.10">
    <property type="entry name" value="Porin chaperone SurA, peptide-binding domain"/>
    <property type="match status" value="1"/>
</dbReference>
<dbReference type="HAMAP" id="MF_01183">
    <property type="entry name" value="Chaperone_SurA"/>
    <property type="match status" value="1"/>
</dbReference>
<dbReference type="InterPro" id="IPR050280">
    <property type="entry name" value="OMP_Chaperone_SurA"/>
</dbReference>
<dbReference type="InterPro" id="IPR046357">
    <property type="entry name" value="PPIase_dom_sf"/>
</dbReference>
<dbReference type="InterPro" id="IPR000297">
    <property type="entry name" value="PPIase_PpiC"/>
</dbReference>
<dbReference type="InterPro" id="IPR023058">
    <property type="entry name" value="PPIase_PpiC_CS"/>
</dbReference>
<dbReference type="InterPro" id="IPR023034">
    <property type="entry name" value="PPIase_SurA"/>
</dbReference>
<dbReference type="InterPro" id="IPR015391">
    <property type="entry name" value="SurA_N"/>
</dbReference>
<dbReference type="InterPro" id="IPR027304">
    <property type="entry name" value="Trigger_fact/SurA_dom_sf"/>
</dbReference>
<dbReference type="PANTHER" id="PTHR47637">
    <property type="entry name" value="CHAPERONE SURA"/>
    <property type="match status" value="1"/>
</dbReference>
<dbReference type="PANTHER" id="PTHR47637:SF1">
    <property type="entry name" value="CHAPERONE SURA"/>
    <property type="match status" value="1"/>
</dbReference>
<dbReference type="Pfam" id="PF00639">
    <property type="entry name" value="Rotamase"/>
    <property type="match status" value="1"/>
</dbReference>
<dbReference type="Pfam" id="PF13616">
    <property type="entry name" value="Rotamase_3"/>
    <property type="match status" value="1"/>
</dbReference>
<dbReference type="Pfam" id="PF09312">
    <property type="entry name" value="SurA_N"/>
    <property type="match status" value="1"/>
</dbReference>
<dbReference type="SUPFAM" id="SSF54534">
    <property type="entry name" value="FKBP-like"/>
    <property type="match status" value="2"/>
</dbReference>
<dbReference type="SUPFAM" id="SSF109998">
    <property type="entry name" value="Triger factor/SurA peptide-binding domain-like"/>
    <property type="match status" value="1"/>
</dbReference>
<dbReference type="PROSITE" id="PS01096">
    <property type="entry name" value="PPIC_PPIASE_1"/>
    <property type="match status" value="1"/>
</dbReference>
<dbReference type="PROSITE" id="PS50198">
    <property type="entry name" value="PPIC_PPIASE_2"/>
    <property type="match status" value="2"/>
</dbReference>
<evidence type="ECO:0000255" key="1">
    <source>
        <dbReference type="HAMAP-Rule" id="MF_01183"/>
    </source>
</evidence>
<keyword id="KW-0143">Chaperone</keyword>
<keyword id="KW-0413">Isomerase</keyword>
<keyword id="KW-0574">Periplasm</keyword>
<keyword id="KW-1185">Reference proteome</keyword>
<keyword id="KW-0677">Repeat</keyword>
<keyword id="KW-0697">Rotamase</keyword>
<keyword id="KW-0732">Signal</keyword>
<protein>
    <recommendedName>
        <fullName evidence="1">Chaperone SurA</fullName>
    </recommendedName>
    <alternativeName>
        <fullName evidence="1">Peptidyl-prolyl cis-trans isomerase SurA</fullName>
        <shortName evidence="1">PPIase SurA</shortName>
        <ecNumber evidence="1">5.2.1.8</ecNumber>
    </alternativeName>
    <alternativeName>
        <fullName evidence="1">Rotamase SurA</fullName>
    </alternativeName>
</protein>
<comment type="function">
    <text evidence="1">Chaperone involved in the correct folding and assembly of outer membrane proteins. Recognizes specific patterns of aromatic residues and the orientation of their side chains, which are found more frequently in integral outer membrane proteins. May act in both early periplasmic and late outer membrane-associated steps of protein maturation.</text>
</comment>
<comment type="catalytic activity">
    <reaction evidence="1">
        <text>[protein]-peptidylproline (omega=180) = [protein]-peptidylproline (omega=0)</text>
        <dbReference type="Rhea" id="RHEA:16237"/>
        <dbReference type="Rhea" id="RHEA-COMP:10747"/>
        <dbReference type="Rhea" id="RHEA-COMP:10748"/>
        <dbReference type="ChEBI" id="CHEBI:83833"/>
        <dbReference type="ChEBI" id="CHEBI:83834"/>
        <dbReference type="EC" id="5.2.1.8"/>
    </reaction>
</comment>
<comment type="subcellular location">
    <subcellularLocation>
        <location evidence="1">Periplasm</location>
    </subcellularLocation>
    <text evidence="1">Is capable of associating with the outer membrane.</text>
</comment>
<comment type="domain">
    <text evidence="1">The PPIase activity resides only in the second parvulin domain. The N-terminal region and the C-terminal tail are necessary and sufficient for the chaperone activity of SurA. The PPIase activity is dispensable for SurA to function as a chaperone. The N-terminal region and the C-terminal tail are also required for porin recognition.</text>
</comment>
<feature type="signal peptide" evidence="1">
    <location>
        <begin position="1"/>
        <end position="25"/>
    </location>
</feature>
<feature type="chain" id="PRO_5000101392" description="Chaperone SurA">
    <location>
        <begin position="26"/>
        <end position="440"/>
    </location>
</feature>
<feature type="domain" description="PpiC 1" evidence="1">
    <location>
        <begin position="182"/>
        <end position="283"/>
    </location>
</feature>
<feature type="domain" description="PpiC 2" evidence="1">
    <location>
        <begin position="294"/>
        <end position="392"/>
    </location>
</feature>
<sequence length="440" mass="49334">MGTKLSSRSPFSLPFLTLLAGMAIAQQPAHSGVETIDHIVAVVNENVITRHELDEMLGAMLKQLQKQGVQPPPPAVLEKQLLERIILNRVQLQLANETGLTVSDAELDQTLRRIAQENKMSLQEFDRALAEDGVSFSKFRDEIRDEIILVRLKEREVSNRVSVTEGEVDHFLETQEDSPSQSDEYRIAHILIQVSEGADPLKRDAARQRAESALAKLKAGTEFAQVAAEFSDAPDAMEGGLLNWRPAAQLTKKFAEILTPMKPGEITGIIPSPNGFHILKLVERRNQDTVTTMIDQTHARHILIKISELTSEADAHRRVTELKERLDNGSKFEELAKLHSEDASAPTGGDLGWISPGDTVPEFEQAMSALKPGEISSPVQSPFGWHLIQVIERRTQDVSQERKRQSARQAIRARKAETAFQEWLQRLRDRAYVEYRLEEG</sequence>
<gene>
    <name evidence="1" type="primary">surA</name>
    <name type="ordered locus">Nmul_A0520</name>
</gene>
<organism>
    <name type="scientific">Nitrosospira multiformis (strain ATCC 25196 / NCIMB 11849 / C 71)</name>
    <dbReference type="NCBI Taxonomy" id="323848"/>
    <lineage>
        <taxon>Bacteria</taxon>
        <taxon>Pseudomonadati</taxon>
        <taxon>Pseudomonadota</taxon>
        <taxon>Betaproteobacteria</taxon>
        <taxon>Nitrosomonadales</taxon>
        <taxon>Nitrosomonadaceae</taxon>
        <taxon>Nitrosospira</taxon>
    </lineage>
</organism>
<reference key="1">
    <citation type="submission" date="2005-08" db="EMBL/GenBank/DDBJ databases">
        <title>Complete sequence of chromosome 1 of Nitrosospira multiformis ATCC 25196.</title>
        <authorList>
            <person name="Copeland A."/>
            <person name="Lucas S."/>
            <person name="Lapidus A."/>
            <person name="Barry K."/>
            <person name="Detter J.C."/>
            <person name="Glavina T."/>
            <person name="Hammon N."/>
            <person name="Israni S."/>
            <person name="Pitluck S."/>
            <person name="Chain P."/>
            <person name="Malfatti S."/>
            <person name="Shin M."/>
            <person name="Vergez L."/>
            <person name="Schmutz J."/>
            <person name="Larimer F."/>
            <person name="Land M."/>
            <person name="Hauser L."/>
            <person name="Kyrpides N."/>
            <person name="Lykidis A."/>
            <person name="Richardson P."/>
        </authorList>
    </citation>
    <scope>NUCLEOTIDE SEQUENCE [LARGE SCALE GENOMIC DNA]</scope>
    <source>
        <strain>ATCC 25196 / NCIMB 11849 / C 71</strain>
    </source>
</reference>
<proteinExistence type="inferred from homology"/>
<accession>Q2YBP3</accession>
<name>SURA_NITMU</name>